<reference key="1">
    <citation type="submission" date="2007-10" db="EMBL/GenBank/DDBJ databases">
        <title>Complete sequence of Desulfococcus oleovorans Hxd3.</title>
        <authorList>
            <consortium name="US DOE Joint Genome Institute"/>
            <person name="Copeland A."/>
            <person name="Lucas S."/>
            <person name="Lapidus A."/>
            <person name="Barry K."/>
            <person name="Glavina del Rio T."/>
            <person name="Dalin E."/>
            <person name="Tice H."/>
            <person name="Pitluck S."/>
            <person name="Kiss H."/>
            <person name="Brettin T."/>
            <person name="Bruce D."/>
            <person name="Detter J.C."/>
            <person name="Han C."/>
            <person name="Schmutz J."/>
            <person name="Larimer F."/>
            <person name="Land M."/>
            <person name="Hauser L."/>
            <person name="Kyrpides N."/>
            <person name="Kim E."/>
            <person name="Wawrik B."/>
            <person name="Richardson P."/>
        </authorList>
    </citation>
    <scope>NUCLEOTIDE SEQUENCE [LARGE SCALE GENOMIC DNA]</scope>
    <source>
        <strain>DSM 6200 / JCM 39069 / Hxd3</strain>
    </source>
</reference>
<accession>A8ZZJ0</accession>
<proteinExistence type="inferred from homology"/>
<gene>
    <name evidence="1" type="primary">fhs</name>
    <name type="ordered locus">Dole_3059</name>
</gene>
<organism>
    <name type="scientific">Desulfosudis oleivorans (strain DSM 6200 / JCM 39069 / Hxd3)</name>
    <name type="common">Desulfococcus oleovorans</name>
    <dbReference type="NCBI Taxonomy" id="96561"/>
    <lineage>
        <taxon>Bacteria</taxon>
        <taxon>Pseudomonadati</taxon>
        <taxon>Thermodesulfobacteriota</taxon>
        <taxon>Desulfobacteria</taxon>
        <taxon>Desulfobacterales</taxon>
        <taxon>Desulfosudaceae</taxon>
        <taxon>Desulfosudis</taxon>
    </lineage>
</organism>
<dbReference type="EC" id="6.3.4.3" evidence="1"/>
<dbReference type="EMBL" id="CP000859">
    <property type="protein sequence ID" value="ABW68862.1"/>
    <property type="molecule type" value="Genomic_DNA"/>
</dbReference>
<dbReference type="RefSeq" id="WP_012176473.1">
    <property type="nucleotide sequence ID" value="NC_009943.1"/>
</dbReference>
<dbReference type="SMR" id="A8ZZJ0"/>
<dbReference type="STRING" id="96561.Dole_3059"/>
<dbReference type="KEGG" id="dol:Dole_3059"/>
<dbReference type="eggNOG" id="COG2759">
    <property type="taxonomic scope" value="Bacteria"/>
</dbReference>
<dbReference type="HOGENOM" id="CLU_003601_3_3_7"/>
<dbReference type="OrthoDB" id="9761733at2"/>
<dbReference type="UniPathway" id="UPA00193"/>
<dbReference type="Proteomes" id="UP000008561">
    <property type="component" value="Chromosome"/>
</dbReference>
<dbReference type="GO" id="GO:0005524">
    <property type="term" value="F:ATP binding"/>
    <property type="evidence" value="ECO:0007669"/>
    <property type="project" value="UniProtKB-UniRule"/>
</dbReference>
<dbReference type="GO" id="GO:0004329">
    <property type="term" value="F:formate-tetrahydrofolate ligase activity"/>
    <property type="evidence" value="ECO:0007669"/>
    <property type="project" value="UniProtKB-UniRule"/>
</dbReference>
<dbReference type="GO" id="GO:0035999">
    <property type="term" value="P:tetrahydrofolate interconversion"/>
    <property type="evidence" value="ECO:0007669"/>
    <property type="project" value="UniProtKB-UniRule"/>
</dbReference>
<dbReference type="CDD" id="cd00477">
    <property type="entry name" value="FTHFS"/>
    <property type="match status" value="1"/>
</dbReference>
<dbReference type="Gene3D" id="3.30.1510.10">
    <property type="entry name" value="Domain 2, N(10)-formyltetrahydrofolate synthetase"/>
    <property type="match status" value="1"/>
</dbReference>
<dbReference type="Gene3D" id="3.10.410.10">
    <property type="entry name" value="Formyltetrahydrofolate synthetase, domain 3"/>
    <property type="match status" value="1"/>
</dbReference>
<dbReference type="Gene3D" id="3.40.50.300">
    <property type="entry name" value="P-loop containing nucleotide triphosphate hydrolases"/>
    <property type="match status" value="1"/>
</dbReference>
<dbReference type="HAMAP" id="MF_01543">
    <property type="entry name" value="FTHFS"/>
    <property type="match status" value="1"/>
</dbReference>
<dbReference type="InterPro" id="IPR000559">
    <property type="entry name" value="Formate_THF_ligase"/>
</dbReference>
<dbReference type="InterPro" id="IPR027417">
    <property type="entry name" value="P-loop_NTPase"/>
</dbReference>
<dbReference type="NCBIfam" id="NF010032">
    <property type="entry name" value="PRK13507.1"/>
    <property type="match status" value="1"/>
</dbReference>
<dbReference type="Pfam" id="PF01268">
    <property type="entry name" value="FTHFS"/>
    <property type="match status" value="1"/>
</dbReference>
<dbReference type="SUPFAM" id="SSF52540">
    <property type="entry name" value="P-loop containing nucleoside triphosphate hydrolases"/>
    <property type="match status" value="1"/>
</dbReference>
<protein>
    <recommendedName>
        <fullName evidence="1">Formate--tetrahydrofolate ligase</fullName>
        <ecNumber evidence="1">6.3.4.3</ecNumber>
    </recommendedName>
    <alternativeName>
        <fullName evidence="1">Formyltetrahydrofolate synthetase</fullName>
        <shortName evidence="1">FHS</shortName>
        <shortName evidence="1">FTHFS</shortName>
    </alternativeName>
</protein>
<sequence length="587" mass="63724">MAYDATKMADWQISEEAEKNMPMPEEWCEKLGLEKEEMLAMGRLSKLDFLKIIKRLEAKPDGKYIEVTAITPTPLGEGKSTTSLGLMEGLGARGKSVGGALRQPSGGPTMNVKGTAAGGGNSLLIPMTEFSLGLTGDINDIMNAHNLGMVAMTARMQHERNYNDEQLQRLTGMRRLDIDPTRVEMGWIIDFCAQALRNIVIGLGGRTDGYTMQSKFGIAVGSELMAILAVATDLADLKERINNITVAFDKSGKPVTCRDLEVGNAMAAFMRNTINPTLMSTAEYQPCLVHAGPFANIAVGQSSIIADRVGLKLWDYHVTESGFAADIGFEKFWNVKCRFSGLKPHVSVLTATIRALKMHGGGPKVVAGKALDDAYTKENLALVEKGVENMVHMIGVIRKSGINPVVCVNRFYTDTDAEVAIVKKAAEAAGARCAESKHWEKGGEGALEFADAVIDACEEGNDFDFLYPLEMKLRDRVDKIAREVYGADGVDWSPEATAKAEMLENDPKYADFATMMVKTHLSLTHDPVKKGVPKGWRLPIRDVLIYSGAKFLCPCAGTISLMPGTGSNPAFRRIDVDPATGKVSGLF</sequence>
<evidence type="ECO:0000255" key="1">
    <source>
        <dbReference type="HAMAP-Rule" id="MF_01543"/>
    </source>
</evidence>
<comment type="catalytic activity">
    <reaction evidence="1">
        <text>(6S)-5,6,7,8-tetrahydrofolate + formate + ATP = (6R)-10-formyltetrahydrofolate + ADP + phosphate</text>
        <dbReference type="Rhea" id="RHEA:20221"/>
        <dbReference type="ChEBI" id="CHEBI:15740"/>
        <dbReference type="ChEBI" id="CHEBI:30616"/>
        <dbReference type="ChEBI" id="CHEBI:43474"/>
        <dbReference type="ChEBI" id="CHEBI:57453"/>
        <dbReference type="ChEBI" id="CHEBI:195366"/>
        <dbReference type="ChEBI" id="CHEBI:456216"/>
        <dbReference type="EC" id="6.3.4.3"/>
    </reaction>
</comment>
<comment type="pathway">
    <text evidence="1">One-carbon metabolism; tetrahydrofolate interconversion.</text>
</comment>
<comment type="similarity">
    <text evidence="1">Belongs to the formate--tetrahydrofolate ligase family.</text>
</comment>
<name>FTHS_DESOH</name>
<feature type="chain" id="PRO_1000146681" description="Formate--tetrahydrofolate ligase">
    <location>
        <begin position="1"/>
        <end position="587"/>
    </location>
</feature>
<feature type="binding site" evidence="1">
    <location>
        <begin position="73"/>
        <end position="80"/>
    </location>
    <ligand>
        <name>ATP</name>
        <dbReference type="ChEBI" id="CHEBI:30616"/>
    </ligand>
</feature>
<keyword id="KW-0067">ATP-binding</keyword>
<keyword id="KW-0436">Ligase</keyword>
<keyword id="KW-0547">Nucleotide-binding</keyword>
<keyword id="KW-0554">One-carbon metabolism</keyword>
<keyword id="KW-1185">Reference proteome</keyword>